<feature type="chain" id="PRO_0000407869" description="Ribonuclease VapC6">
    <location>
        <begin position="1"/>
        <end position="127"/>
    </location>
</feature>
<feature type="domain" description="PINc" evidence="1">
    <location>
        <begin position="26"/>
        <end position="120"/>
    </location>
</feature>
<feature type="binding site" evidence="1">
    <location>
        <position position="86"/>
    </location>
    <ligand>
        <name>Mg(2+)</name>
        <dbReference type="ChEBI" id="CHEBI:18420"/>
    </ligand>
</feature>
<gene>
    <name evidence="1" type="primary">vapC6</name>
    <name type="ordered locus">Rv0656c</name>
</gene>
<name>VAPC6_MYCTU</name>
<accession>P9WFB5</accession>
<accession>L0T639</accession>
<accession>O06783</accession>
<accession>Q7D9H2</accession>
<proteinExistence type="inferred from homology"/>
<organism>
    <name type="scientific">Mycobacterium tuberculosis (strain ATCC 25618 / H37Rv)</name>
    <dbReference type="NCBI Taxonomy" id="83332"/>
    <lineage>
        <taxon>Bacteria</taxon>
        <taxon>Bacillati</taxon>
        <taxon>Actinomycetota</taxon>
        <taxon>Actinomycetes</taxon>
        <taxon>Mycobacteriales</taxon>
        <taxon>Mycobacteriaceae</taxon>
        <taxon>Mycobacterium</taxon>
        <taxon>Mycobacterium tuberculosis complex</taxon>
    </lineage>
</organism>
<sequence length="127" mass="13960">MAAATTTGTHRGLELRAAQRAVGSCEPQRAEFCRSARNADEFDQMSRMFGDVYPDVPVPKSVWRWIDSAQHRLARAGAVGALSVVDLLICDTAAARGLVVLHDDADYELAERHLPDIRVRRVVSADD</sequence>
<reference key="1">
    <citation type="journal article" date="1998" name="Nature">
        <title>Deciphering the biology of Mycobacterium tuberculosis from the complete genome sequence.</title>
        <authorList>
            <person name="Cole S.T."/>
            <person name="Brosch R."/>
            <person name="Parkhill J."/>
            <person name="Garnier T."/>
            <person name="Churcher C.M."/>
            <person name="Harris D.E."/>
            <person name="Gordon S.V."/>
            <person name="Eiglmeier K."/>
            <person name="Gas S."/>
            <person name="Barry C.E. III"/>
            <person name="Tekaia F."/>
            <person name="Badcock K."/>
            <person name="Basham D."/>
            <person name="Brown D."/>
            <person name="Chillingworth T."/>
            <person name="Connor R."/>
            <person name="Davies R.M."/>
            <person name="Devlin K."/>
            <person name="Feltwell T."/>
            <person name="Gentles S."/>
            <person name="Hamlin N."/>
            <person name="Holroyd S."/>
            <person name="Hornsby T."/>
            <person name="Jagels K."/>
            <person name="Krogh A."/>
            <person name="McLean J."/>
            <person name="Moule S."/>
            <person name="Murphy L.D."/>
            <person name="Oliver S."/>
            <person name="Osborne J."/>
            <person name="Quail M.A."/>
            <person name="Rajandream M.A."/>
            <person name="Rogers J."/>
            <person name="Rutter S."/>
            <person name="Seeger K."/>
            <person name="Skelton S."/>
            <person name="Squares S."/>
            <person name="Squares R."/>
            <person name="Sulston J.E."/>
            <person name="Taylor K."/>
            <person name="Whitehead S."/>
            <person name="Barrell B.G."/>
        </authorList>
    </citation>
    <scope>NUCLEOTIDE SEQUENCE [LARGE SCALE GENOMIC DNA]</scope>
    <source>
        <strain>ATCC 25618 / H37Rv</strain>
    </source>
</reference>
<reference key="2">
    <citation type="journal article" date="2005" name="Nucleic Acids Res.">
        <title>Toxin-antitoxin loci are highly abundant in free-living but lost from host-associated prokaryotes.</title>
        <authorList>
            <person name="Pandey D.P."/>
            <person name="Gerdes K."/>
        </authorList>
    </citation>
    <scope>POSSIBLE FUNCTION</scope>
    <source>
        <strain>ATCC 25618 / H37Rv</strain>
    </source>
</reference>
<keyword id="KW-0378">Hydrolase</keyword>
<keyword id="KW-0460">Magnesium</keyword>
<keyword id="KW-0479">Metal-binding</keyword>
<keyword id="KW-0540">Nuclease</keyword>
<keyword id="KW-1185">Reference proteome</keyword>
<keyword id="KW-1277">Toxin-antitoxin system</keyword>
<dbReference type="EC" id="3.1.-.-" evidence="1"/>
<dbReference type="EMBL" id="AL123456">
    <property type="protein sequence ID" value="CCP43399.1"/>
    <property type="molecule type" value="Genomic_DNA"/>
</dbReference>
<dbReference type="PIR" id="C70534">
    <property type="entry name" value="C70534"/>
</dbReference>
<dbReference type="RefSeq" id="NP_215170.1">
    <property type="nucleotide sequence ID" value="NC_000962.3"/>
</dbReference>
<dbReference type="RefSeq" id="WP_003403365.1">
    <property type="nucleotide sequence ID" value="NZ_NVQJ01000007.1"/>
</dbReference>
<dbReference type="SMR" id="P9WFB5"/>
<dbReference type="STRING" id="83332.Rv0656c"/>
<dbReference type="PaxDb" id="83332-Rv0656c"/>
<dbReference type="DNASU" id="888106"/>
<dbReference type="GeneID" id="888106"/>
<dbReference type="KEGG" id="mtu:Rv0656c"/>
<dbReference type="KEGG" id="mtv:RVBD_0656c"/>
<dbReference type="TubercuList" id="Rv0656c"/>
<dbReference type="eggNOG" id="COG1487">
    <property type="taxonomic scope" value="Bacteria"/>
</dbReference>
<dbReference type="InParanoid" id="P9WFB5"/>
<dbReference type="OrthoDB" id="5185254at2"/>
<dbReference type="Proteomes" id="UP000001584">
    <property type="component" value="Chromosome"/>
</dbReference>
<dbReference type="GO" id="GO:0000287">
    <property type="term" value="F:magnesium ion binding"/>
    <property type="evidence" value="ECO:0007669"/>
    <property type="project" value="UniProtKB-UniRule"/>
</dbReference>
<dbReference type="GO" id="GO:0004521">
    <property type="term" value="F:RNA endonuclease activity"/>
    <property type="evidence" value="ECO:0000318"/>
    <property type="project" value="GO_Central"/>
</dbReference>
<dbReference type="Gene3D" id="3.40.50.1010">
    <property type="entry name" value="5'-nuclease"/>
    <property type="match status" value="1"/>
</dbReference>
<dbReference type="HAMAP" id="MF_00265">
    <property type="entry name" value="VapC_Nob1"/>
    <property type="match status" value="1"/>
</dbReference>
<dbReference type="InterPro" id="IPR050556">
    <property type="entry name" value="Type_II_TA_system_RNase"/>
</dbReference>
<dbReference type="InterPro" id="IPR022907">
    <property type="entry name" value="VapC_family"/>
</dbReference>
<dbReference type="PANTHER" id="PTHR33653">
    <property type="entry name" value="RIBONUCLEASE VAPC2"/>
    <property type="match status" value="1"/>
</dbReference>
<dbReference type="PANTHER" id="PTHR33653:SF1">
    <property type="entry name" value="RIBONUCLEASE VAPC2"/>
    <property type="match status" value="1"/>
</dbReference>
<comment type="function">
    <text evidence="1">Toxic component of a type II type II toxin-antitoxin (TA) system. An RNase. The cognate antitoxin is VapB6 (By similarity).</text>
</comment>
<comment type="cofactor">
    <cofactor evidence="1">
        <name>Mg(2+)</name>
        <dbReference type="ChEBI" id="CHEBI:18420"/>
    </cofactor>
</comment>
<comment type="similarity">
    <text evidence="1">Belongs to the PINc/VapC protein family.</text>
</comment>
<evidence type="ECO:0000255" key="1">
    <source>
        <dbReference type="HAMAP-Rule" id="MF_00265"/>
    </source>
</evidence>
<protein>
    <recommendedName>
        <fullName evidence="1">Ribonuclease VapC6</fullName>
        <shortName evidence="1">RNase VapC6</shortName>
        <ecNumber evidence="1">3.1.-.-</ecNumber>
    </recommendedName>
    <alternativeName>
        <fullName evidence="1">Toxin VapC6</fullName>
    </alternativeName>
</protein>